<name>RL29_THEGJ</name>
<comment type="similarity">
    <text evidence="1">Belongs to the universal ribosomal protein uL29 family.</text>
</comment>
<accession>C5A279</accession>
<proteinExistence type="inferred from homology"/>
<gene>
    <name evidence="1" type="primary">rpl29</name>
    <name type="ordered locus">TGAM_1996</name>
</gene>
<feature type="chain" id="PRO_1000205640" description="Large ribosomal subunit protein uL29">
    <location>
        <begin position="1"/>
        <end position="66"/>
    </location>
</feature>
<dbReference type="EMBL" id="CP001398">
    <property type="protein sequence ID" value="ACS34498.1"/>
    <property type="molecule type" value="Genomic_DNA"/>
</dbReference>
<dbReference type="RefSeq" id="WP_015859601.1">
    <property type="nucleotide sequence ID" value="NC_012804.1"/>
</dbReference>
<dbReference type="SMR" id="C5A279"/>
<dbReference type="STRING" id="593117.TGAM_1996"/>
<dbReference type="PaxDb" id="593117-TGAM_1996"/>
<dbReference type="GeneID" id="7987053"/>
<dbReference type="KEGG" id="tga:TGAM_1996"/>
<dbReference type="PATRIC" id="fig|593117.10.peg.2006"/>
<dbReference type="eggNOG" id="arCOG00785">
    <property type="taxonomic scope" value="Archaea"/>
</dbReference>
<dbReference type="HOGENOM" id="CLU_158491_2_2_2"/>
<dbReference type="OrthoDB" id="11736at2157"/>
<dbReference type="Proteomes" id="UP000001488">
    <property type="component" value="Chromosome"/>
</dbReference>
<dbReference type="GO" id="GO:1990904">
    <property type="term" value="C:ribonucleoprotein complex"/>
    <property type="evidence" value="ECO:0007669"/>
    <property type="project" value="UniProtKB-KW"/>
</dbReference>
<dbReference type="GO" id="GO:0005840">
    <property type="term" value="C:ribosome"/>
    <property type="evidence" value="ECO:0007669"/>
    <property type="project" value="UniProtKB-KW"/>
</dbReference>
<dbReference type="GO" id="GO:0003735">
    <property type="term" value="F:structural constituent of ribosome"/>
    <property type="evidence" value="ECO:0007669"/>
    <property type="project" value="InterPro"/>
</dbReference>
<dbReference type="GO" id="GO:0006412">
    <property type="term" value="P:translation"/>
    <property type="evidence" value="ECO:0007669"/>
    <property type="project" value="UniProtKB-UniRule"/>
</dbReference>
<dbReference type="CDD" id="cd00427">
    <property type="entry name" value="Ribosomal_L29_HIP"/>
    <property type="match status" value="1"/>
</dbReference>
<dbReference type="Gene3D" id="1.10.287.310">
    <property type="match status" value="1"/>
</dbReference>
<dbReference type="HAMAP" id="MF_00374">
    <property type="entry name" value="Ribosomal_uL29"/>
    <property type="match status" value="1"/>
</dbReference>
<dbReference type="InterPro" id="IPR001854">
    <property type="entry name" value="Ribosomal_uL29"/>
</dbReference>
<dbReference type="InterPro" id="IPR018254">
    <property type="entry name" value="Ribosomal_uL29_CS"/>
</dbReference>
<dbReference type="InterPro" id="IPR036049">
    <property type="entry name" value="Ribosomal_uL29_sf"/>
</dbReference>
<dbReference type="NCBIfam" id="TIGR00012">
    <property type="entry name" value="L29"/>
    <property type="match status" value="1"/>
</dbReference>
<dbReference type="Pfam" id="PF00831">
    <property type="entry name" value="Ribosomal_L29"/>
    <property type="match status" value="1"/>
</dbReference>
<dbReference type="SUPFAM" id="SSF46561">
    <property type="entry name" value="Ribosomal protein L29 (L29p)"/>
    <property type="match status" value="1"/>
</dbReference>
<dbReference type="PROSITE" id="PS00579">
    <property type="entry name" value="RIBOSOMAL_L29"/>
    <property type="match status" value="1"/>
</dbReference>
<organism>
    <name type="scientific">Thermococcus gammatolerans (strain DSM 15229 / JCM 11827 / EJ3)</name>
    <dbReference type="NCBI Taxonomy" id="593117"/>
    <lineage>
        <taxon>Archaea</taxon>
        <taxon>Methanobacteriati</taxon>
        <taxon>Methanobacteriota</taxon>
        <taxon>Thermococci</taxon>
        <taxon>Thermococcales</taxon>
        <taxon>Thermococcaceae</taxon>
        <taxon>Thermococcus</taxon>
    </lineage>
</organism>
<sequence>MKPSEIREMSIEEIDEKIRQLRLELAKERGMLTMGTSTENPMVIRNLRRDIARLLTIKKEKLREKR</sequence>
<keyword id="KW-1185">Reference proteome</keyword>
<keyword id="KW-0687">Ribonucleoprotein</keyword>
<keyword id="KW-0689">Ribosomal protein</keyword>
<reference key="1">
    <citation type="journal article" date="2007" name="Genome Biol.">
        <title>Genome analysis and genome-wide proteomics of Thermococcus gammatolerans, the most radioresistant organism known amongst the Archaea.</title>
        <authorList>
            <person name="Zivanovic Y."/>
            <person name="Armengaud J."/>
            <person name="Lagorce A."/>
            <person name="Leplat C."/>
            <person name="Guerin P."/>
            <person name="Dutertre M."/>
            <person name="Anthouard V."/>
            <person name="Forterre P."/>
            <person name="Wincker P."/>
            <person name="Confalonieri F."/>
        </authorList>
    </citation>
    <scope>NUCLEOTIDE SEQUENCE [LARGE SCALE GENOMIC DNA]</scope>
    <source>
        <strain>DSM 15229 / JCM 11827 / EJ3</strain>
    </source>
</reference>
<protein>
    <recommendedName>
        <fullName evidence="1">Large ribosomal subunit protein uL29</fullName>
    </recommendedName>
    <alternativeName>
        <fullName evidence="2">50S ribosomal protein L29</fullName>
    </alternativeName>
</protein>
<evidence type="ECO:0000255" key="1">
    <source>
        <dbReference type="HAMAP-Rule" id="MF_00374"/>
    </source>
</evidence>
<evidence type="ECO:0000305" key="2"/>